<proteinExistence type="inferred from homology"/>
<comment type="function">
    <text evidence="1">One of several proteins that assist in the late maturation steps of the functional core of the 30S ribosomal subunit. Associates with free 30S ribosomal subunits (but not with 30S subunits that are part of 70S ribosomes or polysomes). Required for efficient processing of 16S rRNA. May interact with the 5'-terminal helix region of 16S rRNA.</text>
</comment>
<comment type="subunit">
    <text evidence="1">Monomer. Binds 30S ribosomal subunits, but not 50S ribosomal subunits or 70S ribosomes.</text>
</comment>
<comment type="subcellular location">
    <subcellularLocation>
        <location evidence="1">Cytoplasm</location>
    </subcellularLocation>
</comment>
<comment type="similarity">
    <text evidence="1">Belongs to the RbfA family.</text>
</comment>
<reference key="1">
    <citation type="submission" date="2009-03" db="EMBL/GenBank/DDBJ databases">
        <title>Comparison of the complete genome sequences of Rhodococcus erythropolis PR4 and Rhodococcus opacus B4.</title>
        <authorList>
            <person name="Takarada H."/>
            <person name="Sekine M."/>
            <person name="Hosoyama A."/>
            <person name="Yamada R."/>
            <person name="Fujisawa T."/>
            <person name="Omata S."/>
            <person name="Shimizu A."/>
            <person name="Tsukatani N."/>
            <person name="Tanikawa S."/>
            <person name="Fujita N."/>
            <person name="Harayama S."/>
        </authorList>
    </citation>
    <scope>NUCLEOTIDE SEQUENCE [LARGE SCALE GENOMIC DNA]</scope>
    <source>
        <strain>B4</strain>
    </source>
</reference>
<dbReference type="EMBL" id="AP011115">
    <property type="protein sequence ID" value="BAH54932.1"/>
    <property type="molecule type" value="Genomic_DNA"/>
</dbReference>
<dbReference type="RefSeq" id="WP_015890370.1">
    <property type="nucleotide sequence ID" value="NC_012522.1"/>
</dbReference>
<dbReference type="SMR" id="C1B315"/>
<dbReference type="STRING" id="632772.ROP_66850"/>
<dbReference type="KEGG" id="rop:ROP_66850"/>
<dbReference type="PATRIC" id="fig|632772.20.peg.6971"/>
<dbReference type="HOGENOM" id="CLU_089475_0_0_11"/>
<dbReference type="OrthoDB" id="307788at2"/>
<dbReference type="Proteomes" id="UP000002212">
    <property type="component" value="Chromosome"/>
</dbReference>
<dbReference type="GO" id="GO:0005829">
    <property type="term" value="C:cytosol"/>
    <property type="evidence" value="ECO:0007669"/>
    <property type="project" value="TreeGrafter"/>
</dbReference>
<dbReference type="GO" id="GO:0043024">
    <property type="term" value="F:ribosomal small subunit binding"/>
    <property type="evidence" value="ECO:0007669"/>
    <property type="project" value="TreeGrafter"/>
</dbReference>
<dbReference type="GO" id="GO:0030490">
    <property type="term" value="P:maturation of SSU-rRNA"/>
    <property type="evidence" value="ECO:0007669"/>
    <property type="project" value="UniProtKB-UniRule"/>
</dbReference>
<dbReference type="FunFam" id="3.30.300.20:FF:000018">
    <property type="entry name" value="Ribosome-binding factor A"/>
    <property type="match status" value="1"/>
</dbReference>
<dbReference type="Gene3D" id="3.30.300.20">
    <property type="match status" value="1"/>
</dbReference>
<dbReference type="HAMAP" id="MF_00003">
    <property type="entry name" value="RbfA"/>
    <property type="match status" value="1"/>
</dbReference>
<dbReference type="InterPro" id="IPR015946">
    <property type="entry name" value="KH_dom-like_a/b"/>
</dbReference>
<dbReference type="InterPro" id="IPR000238">
    <property type="entry name" value="RbfA"/>
</dbReference>
<dbReference type="InterPro" id="IPR023799">
    <property type="entry name" value="RbfA_dom_sf"/>
</dbReference>
<dbReference type="InterPro" id="IPR020053">
    <property type="entry name" value="Ribosome-bd_factorA_CS"/>
</dbReference>
<dbReference type="NCBIfam" id="TIGR00082">
    <property type="entry name" value="rbfA"/>
    <property type="match status" value="1"/>
</dbReference>
<dbReference type="PANTHER" id="PTHR33515">
    <property type="entry name" value="RIBOSOME-BINDING FACTOR A, CHLOROPLASTIC-RELATED"/>
    <property type="match status" value="1"/>
</dbReference>
<dbReference type="PANTHER" id="PTHR33515:SF1">
    <property type="entry name" value="RIBOSOME-BINDING FACTOR A, CHLOROPLASTIC-RELATED"/>
    <property type="match status" value="1"/>
</dbReference>
<dbReference type="Pfam" id="PF02033">
    <property type="entry name" value="RBFA"/>
    <property type="match status" value="1"/>
</dbReference>
<dbReference type="SUPFAM" id="SSF89919">
    <property type="entry name" value="Ribosome-binding factor A, RbfA"/>
    <property type="match status" value="1"/>
</dbReference>
<dbReference type="PROSITE" id="PS01319">
    <property type="entry name" value="RBFA"/>
    <property type="match status" value="1"/>
</dbReference>
<name>RBFA_RHOOB</name>
<keyword id="KW-0963">Cytoplasm</keyword>
<keyword id="KW-0690">Ribosome biogenesis</keyword>
<accession>C1B315</accession>
<organism>
    <name type="scientific">Rhodococcus opacus (strain B4)</name>
    <dbReference type="NCBI Taxonomy" id="632772"/>
    <lineage>
        <taxon>Bacteria</taxon>
        <taxon>Bacillati</taxon>
        <taxon>Actinomycetota</taxon>
        <taxon>Actinomycetes</taxon>
        <taxon>Mycobacteriales</taxon>
        <taxon>Nocardiaceae</taxon>
        <taxon>Rhodococcus</taxon>
    </lineage>
</organism>
<sequence>MVDPARARKLAKRIGTIVATAIDHEIKDPRLAFVTITDTKVTADLHDATVYYTVMGADLESEPDLVSAAAGLEKAKGVLRSKVGAGTGVRFTPTLTFVADTVPDTARHMEELLARARAADDEVARVAAGASPAGDPDPYKEPRVEDADDAEVDEPSRSRQAD</sequence>
<protein>
    <recommendedName>
        <fullName evidence="1">Ribosome-binding factor A</fullName>
    </recommendedName>
</protein>
<feature type="chain" id="PRO_1000193271" description="Ribosome-binding factor A">
    <location>
        <begin position="1"/>
        <end position="162"/>
    </location>
</feature>
<feature type="region of interest" description="Disordered" evidence="2">
    <location>
        <begin position="123"/>
        <end position="162"/>
    </location>
</feature>
<feature type="compositionally biased region" description="Low complexity" evidence="2">
    <location>
        <begin position="125"/>
        <end position="136"/>
    </location>
</feature>
<gene>
    <name evidence="1" type="primary">rbfA</name>
    <name type="ordered locus">ROP_66850</name>
</gene>
<evidence type="ECO:0000255" key="1">
    <source>
        <dbReference type="HAMAP-Rule" id="MF_00003"/>
    </source>
</evidence>
<evidence type="ECO:0000256" key="2">
    <source>
        <dbReference type="SAM" id="MobiDB-lite"/>
    </source>
</evidence>